<dbReference type="EC" id="2.8.1.10" evidence="1"/>
<dbReference type="EMBL" id="AE001437">
    <property type="protein sequence ID" value="AAK80864.1"/>
    <property type="molecule type" value="Genomic_DNA"/>
</dbReference>
<dbReference type="PIR" id="E97259">
    <property type="entry name" value="E97259"/>
</dbReference>
<dbReference type="RefSeq" id="NP_349524.1">
    <property type="nucleotide sequence ID" value="NC_003030.1"/>
</dbReference>
<dbReference type="RefSeq" id="WP_010966205.1">
    <property type="nucleotide sequence ID" value="NC_003030.1"/>
</dbReference>
<dbReference type="SMR" id="P58262"/>
<dbReference type="STRING" id="272562.CA_C2922"/>
<dbReference type="KEGG" id="cac:CA_C2922"/>
<dbReference type="PATRIC" id="fig|272562.8.peg.3106"/>
<dbReference type="eggNOG" id="COG2022">
    <property type="taxonomic scope" value="Bacteria"/>
</dbReference>
<dbReference type="HOGENOM" id="CLU_062233_1_0_9"/>
<dbReference type="OrthoDB" id="9805935at2"/>
<dbReference type="UniPathway" id="UPA00060"/>
<dbReference type="Proteomes" id="UP000000814">
    <property type="component" value="Chromosome"/>
</dbReference>
<dbReference type="GO" id="GO:0005737">
    <property type="term" value="C:cytoplasm"/>
    <property type="evidence" value="ECO:0007669"/>
    <property type="project" value="UniProtKB-SubCell"/>
</dbReference>
<dbReference type="GO" id="GO:1990107">
    <property type="term" value="F:thiazole synthase activity"/>
    <property type="evidence" value="ECO:0007669"/>
    <property type="project" value="UniProtKB-EC"/>
</dbReference>
<dbReference type="GO" id="GO:0009229">
    <property type="term" value="P:thiamine diphosphate biosynthetic process"/>
    <property type="evidence" value="ECO:0007669"/>
    <property type="project" value="UniProtKB-UniRule"/>
</dbReference>
<dbReference type="CDD" id="cd04728">
    <property type="entry name" value="ThiG"/>
    <property type="match status" value="1"/>
</dbReference>
<dbReference type="Gene3D" id="3.20.20.70">
    <property type="entry name" value="Aldolase class I"/>
    <property type="match status" value="1"/>
</dbReference>
<dbReference type="HAMAP" id="MF_00443">
    <property type="entry name" value="ThiG"/>
    <property type="match status" value="1"/>
</dbReference>
<dbReference type="InterPro" id="IPR013785">
    <property type="entry name" value="Aldolase_TIM"/>
</dbReference>
<dbReference type="InterPro" id="IPR033983">
    <property type="entry name" value="Thiazole_synthase_ThiG"/>
</dbReference>
<dbReference type="InterPro" id="IPR008867">
    <property type="entry name" value="ThiG"/>
</dbReference>
<dbReference type="PANTHER" id="PTHR34266">
    <property type="entry name" value="THIAZOLE SYNTHASE"/>
    <property type="match status" value="1"/>
</dbReference>
<dbReference type="PANTHER" id="PTHR34266:SF2">
    <property type="entry name" value="THIAZOLE SYNTHASE"/>
    <property type="match status" value="1"/>
</dbReference>
<dbReference type="Pfam" id="PF05690">
    <property type="entry name" value="ThiG"/>
    <property type="match status" value="1"/>
</dbReference>
<dbReference type="SUPFAM" id="SSF110399">
    <property type="entry name" value="ThiG-like"/>
    <property type="match status" value="1"/>
</dbReference>
<protein>
    <recommendedName>
        <fullName evidence="1">Thiazole synthase</fullName>
        <ecNumber evidence="1">2.8.1.10</ecNumber>
    </recommendedName>
</protein>
<comment type="function">
    <text evidence="1">Catalyzes the rearrangement of 1-deoxy-D-xylulose 5-phosphate (DXP) to produce the thiazole phosphate moiety of thiamine. Sulfur is provided by the thiocarboxylate moiety of the carrier protein ThiS. In vitro, sulfur can be provided by H(2)S.</text>
</comment>
<comment type="catalytic activity">
    <reaction evidence="1">
        <text>[ThiS sulfur-carrier protein]-C-terminal-Gly-aminoethanethioate + 2-iminoacetate + 1-deoxy-D-xylulose 5-phosphate = [ThiS sulfur-carrier protein]-C-terminal Gly-Gly + 2-[(2R,5Z)-2-carboxy-4-methylthiazol-5(2H)-ylidene]ethyl phosphate + 2 H2O + H(+)</text>
        <dbReference type="Rhea" id="RHEA:26297"/>
        <dbReference type="Rhea" id="RHEA-COMP:12909"/>
        <dbReference type="Rhea" id="RHEA-COMP:19908"/>
        <dbReference type="ChEBI" id="CHEBI:15377"/>
        <dbReference type="ChEBI" id="CHEBI:15378"/>
        <dbReference type="ChEBI" id="CHEBI:57792"/>
        <dbReference type="ChEBI" id="CHEBI:62899"/>
        <dbReference type="ChEBI" id="CHEBI:77846"/>
        <dbReference type="ChEBI" id="CHEBI:90778"/>
        <dbReference type="ChEBI" id="CHEBI:232372"/>
        <dbReference type="EC" id="2.8.1.10"/>
    </reaction>
</comment>
<comment type="pathway">
    <text evidence="1">Cofactor biosynthesis; thiamine diphosphate biosynthesis.</text>
</comment>
<comment type="subunit">
    <text evidence="1">Homotetramer. Forms heterodimers with either ThiH or ThiS.</text>
</comment>
<comment type="subcellular location">
    <subcellularLocation>
        <location evidence="1">Cytoplasm</location>
    </subcellularLocation>
</comment>
<comment type="similarity">
    <text evidence="1">Belongs to the ThiG family.</text>
</comment>
<accession>P58262</accession>
<name>THIG_CLOAB</name>
<sequence>MDELEIGGVKLDSRLFVGTGKLASNEVIPKIMEKSNSKVITVALRRVDITSKQDNILNFIDKDLILLPNTSGARNAEEAIRLARIAKAAGCGNWIKIEVISDNKYLLPDNYETIKATEALVKEGFIVLPYVNPDLMDARRLVNVGAAAVMPLGAPIGSNRGLRTKEMLKILIEEINEVPVVVDAGIGKPSDAAMAMEMGADAVLVNTAIATADNPVLMAEAFSLAVKAGRMAYVAKIGEEKEYASASSPLTGFLR</sequence>
<feature type="chain" id="PRO_0000162806" description="Thiazole synthase">
    <location>
        <begin position="1"/>
        <end position="255"/>
    </location>
</feature>
<feature type="active site" description="Schiff-base intermediate with DXP" evidence="1">
    <location>
        <position position="96"/>
    </location>
</feature>
<feature type="binding site" evidence="1">
    <location>
        <position position="157"/>
    </location>
    <ligand>
        <name>1-deoxy-D-xylulose 5-phosphate</name>
        <dbReference type="ChEBI" id="CHEBI:57792"/>
    </ligand>
</feature>
<feature type="binding site" evidence="1">
    <location>
        <begin position="184"/>
        <end position="185"/>
    </location>
    <ligand>
        <name>1-deoxy-D-xylulose 5-phosphate</name>
        <dbReference type="ChEBI" id="CHEBI:57792"/>
    </ligand>
</feature>
<feature type="binding site" evidence="1">
    <location>
        <begin position="206"/>
        <end position="207"/>
    </location>
    <ligand>
        <name>1-deoxy-D-xylulose 5-phosphate</name>
        <dbReference type="ChEBI" id="CHEBI:57792"/>
    </ligand>
</feature>
<gene>
    <name evidence="1" type="primary">thiG</name>
    <name type="ordered locus">CA_C2922</name>
</gene>
<keyword id="KW-0963">Cytoplasm</keyword>
<keyword id="KW-1185">Reference proteome</keyword>
<keyword id="KW-0704">Schiff base</keyword>
<keyword id="KW-0784">Thiamine biosynthesis</keyword>
<keyword id="KW-0808">Transferase</keyword>
<evidence type="ECO:0000255" key="1">
    <source>
        <dbReference type="HAMAP-Rule" id="MF_00443"/>
    </source>
</evidence>
<proteinExistence type="inferred from homology"/>
<reference key="1">
    <citation type="journal article" date="2001" name="J. Bacteriol.">
        <title>Genome sequence and comparative analysis of the solvent-producing bacterium Clostridium acetobutylicum.</title>
        <authorList>
            <person name="Noelling J."/>
            <person name="Breton G."/>
            <person name="Omelchenko M.V."/>
            <person name="Makarova K.S."/>
            <person name="Zeng Q."/>
            <person name="Gibson R."/>
            <person name="Lee H.M."/>
            <person name="Dubois J."/>
            <person name="Qiu D."/>
            <person name="Hitti J."/>
            <person name="Wolf Y.I."/>
            <person name="Tatusov R.L."/>
            <person name="Sabathe F."/>
            <person name="Doucette-Stamm L.A."/>
            <person name="Soucaille P."/>
            <person name="Daly M.J."/>
            <person name="Bennett G.N."/>
            <person name="Koonin E.V."/>
            <person name="Smith D.R."/>
        </authorList>
    </citation>
    <scope>NUCLEOTIDE SEQUENCE [LARGE SCALE GENOMIC DNA]</scope>
    <source>
        <strain>ATCC 824 / DSM 792 / JCM 1419 / IAM 19013 / LMG 5710 / NBRC 13948 / NRRL B-527 / VKM B-1787 / 2291 / W</strain>
    </source>
</reference>
<organism>
    <name type="scientific">Clostridium acetobutylicum (strain ATCC 824 / DSM 792 / JCM 1419 / IAM 19013 / LMG 5710 / NBRC 13948 / NRRL B-527 / VKM B-1787 / 2291 / W)</name>
    <dbReference type="NCBI Taxonomy" id="272562"/>
    <lineage>
        <taxon>Bacteria</taxon>
        <taxon>Bacillati</taxon>
        <taxon>Bacillota</taxon>
        <taxon>Clostridia</taxon>
        <taxon>Eubacteriales</taxon>
        <taxon>Clostridiaceae</taxon>
        <taxon>Clostridium</taxon>
    </lineage>
</organism>